<comment type="function">
    <text evidence="1">This is one of the proteins that bind and probably mediate the attachment of the 5S RNA into the large ribosomal subunit, where it forms part of the central protuberance.</text>
</comment>
<comment type="subunit">
    <text evidence="1">Part of the 50S ribosomal subunit; part of the 5S rRNA/L5/L18/L25 subcomplex. Contacts the 5S and 23S rRNAs.</text>
</comment>
<comment type="similarity">
    <text evidence="1">Belongs to the universal ribosomal protein uL18 family.</text>
</comment>
<gene>
    <name evidence="1" type="primary">rplR</name>
    <name type="ordered locus">BLA_0378</name>
</gene>
<name>RL18_BIFA0</name>
<proteinExistence type="inferred from homology"/>
<feature type="chain" id="PRO_1000166207" description="Large ribosomal subunit protein uL18">
    <location>
        <begin position="1"/>
        <end position="123"/>
    </location>
</feature>
<organism>
    <name type="scientific">Bifidobacterium animalis subsp. lactis (strain AD011)</name>
    <dbReference type="NCBI Taxonomy" id="442563"/>
    <lineage>
        <taxon>Bacteria</taxon>
        <taxon>Bacillati</taxon>
        <taxon>Actinomycetota</taxon>
        <taxon>Actinomycetes</taxon>
        <taxon>Bifidobacteriales</taxon>
        <taxon>Bifidobacteriaceae</taxon>
        <taxon>Bifidobacterium</taxon>
    </lineage>
</organism>
<keyword id="KW-1185">Reference proteome</keyword>
<keyword id="KW-0687">Ribonucleoprotein</keyword>
<keyword id="KW-0689">Ribosomal protein</keyword>
<keyword id="KW-0694">RNA-binding</keyword>
<keyword id="KW-0699">rRNA-binding</keyword>
<protein>
    <recommendedName>
        <fullName evidence="1">Large ribosomal subunit protein uL18</fullName>
    </recommendedName>
    <alternativeName>
        <fullName evidence="2">50S ribosomal protein L18</fullName>
    </alternativeName>
</protein>
<sequence>MSVKIFGKGKKAALKRRHARIRKRISGTAERPRLVVTRSNRHMVAQIVDDNAGKTLVSESTLMADFADFQGTKTEAAKKVGELLAKKAKDAGITTVVFDRGGNMYHGRVAAVAEGAREGGLAL</sequence>
<evidence type="ECO:0000255" key="1">
    <source>
        <dbReference type="HAMAP-Rule" id="MF_01337"/>
    </source>
</evidence>
<evidence type="ECO:0000305" key="2"/>
<accession>B8DW29</accession>
<reference key="1">
    <citation type="journal article" date="2009" name="J. Bacteriol.">
        <title>Genome sequence of the probiotic bacterium Bifidobacterium animalis subsp. lactis AD011.</title>
        <authorList>
            <person name="Kim J.F."/>
            <person name="Jeong H."/>
            <person name="Yu D.S."/>
            <person name="Choi S.-H."/>
            <person name="Hur C.-G."/>
            <person name="Park M.-S."/>
            <person name="Yoon S.H."/>
            <person name="Kim D.-W."/>
            <person name="Ji G.E."/>
            <person name="Park H.-S."/>
            <person name="Oh T.K."/>
        </authorList>
    </citation>
    <scope>NUCLEOTIDE SEQUENCE [LARGE SCALE GENOMIC DNA]</scope>
    <source>
        <strain>AD011</strain>
    </source>
</reference>
<dbReference type="EMBL" id="CP001213">
    <property type="protein sequence ID" value="ACL28680.1"/>
    <property type="molecule type" value="Genomic_DNA"/>
</dbReference>
<dbReference type="RefSeq" id="WP_004268596.1">
    <property type="nucleotide sequence ID" value="NC_011835.1"/>
</dbReference>
<dbReference type="SMR" id="B8DW29"/>
<dbReference type="STRING" id="442563.BLA_0378"/>
<dbReference type="GeneID" id="29696051"/>
<dbReference type="KEGG" id="bla:BLA_0378"/>
<dbReference type="HOGENOM" id="CLU_098841_0_1_11"/>
<dbReference type="Proteomes" id="UP000002456">
    <property type="component" value="Chromosome"/>
</dbReference>
<dbReference type="GO" id="GO:0022625">
    <property type="term" value="C:cytosolic large ribosomal subunit"/>
    <property type="evidence" value="ECO:0007669"/>
    <property type="project" value="TreeGrafter"/>
</dbReference>
<dbReference type="GO" id="GO:0008097">
    <property type="term" value="F:5S rRNA binding"/>
    <property type="evidence" value="ECO:0007669"/>
    <property type="project" value="TreeGrafter"/>
</dbReference>
<dbReference type="GO" id="GO:0003735">
    <property type="term" value="F:structural constituent of ribosome"/>
    <property type="evidence" value="ECO:0007669"/>
    <property type="project" value="InterPro"/>
</dbReference>
<dbReference type="GO" id="GO:0006412">
    <property type="term" value="P:translation"/>
    <property type="evidence" value="ECO:0007669"/>
    <property type="project" value="UniProtKB-UniRule"/>
</dbReference>
<dbReference type="CDD" id="cd00432">
    <property type="entry name" value="Ribosomal_L18_L5e"/>
    <property type="match status" value="1"/>
</dbReference>
<dbReference type="FunFam" id="3.30.420.100:FF:000001">
    <property type="entry name" value="50S ribosomal protein L18"/>
    <property type="match status" value="1"/>
</dbReference>
<dbReference type="Gene3D" id="3.30.420.100">
    <property type="match status" value="1"/>
</dbReference>
<dbReference type="HAMAP" id="MF_01337_B">
    <property type="entry name" value="Ribosomal_uL18_B"/>
    <property type="match status" value="1"/>
</dbReference>
<dbReference type="InterPro" id="IPR004389">
    <property type="entry name" value="Ribosomal_uL18_bac-type"/>
</dbReference>
<dbReference type="InterPro" id="IPR005484">
    <property type="entry name" value="Ribosomal_uL18_bac/euk"/>
</dbReference>
<dbReference type="NCBIfam" id="TIGR00060">
    <property type="entry name" value="L18_bact"/>
    <property type="match status" value="1"/>
</dbReference>
<dbReference type="PANTHER" id="PTHR12899">
    <property type="entry name" value="39S RIBOSOMAL PROTEIN L18, MITOCHONDRIAL"/>
    <property type="match status" value="1"/>
</dbReference>
<dbReference type="PANTHER" id="PTHR12899:SF3">
    <property type="entry name" value="LARGE RIBOSOMAL SUBUNIT PROTEIN UL18M"/>
    <property type="match status" value="1"/>
</dbReference>
<dbReference type="Pfam" id="PF00861">
    <property type="entry name" value="Ribosomal_L18p"/>
    <property type="match status" value="1"/>
</dbReference>
<dbReference type="SUPFAM" id="SSF53137">
    <property type="entry name" value="Translational machinery components"/>
    <property type="match status" value="1"/>
</dbReference>